<sequence>MSDPLALAQALLRCPSVTPLDAGAQSVLAEALTAQGFTVTQLPFGDIANFYAKRVGPRSGPHLCFAGHTDVVPPGDAPWSVDAFAGEVHDGVLIGRGACDMKGAIASFVAACAARPDHPGTISLLITGDEEGVATDGTVRVLDWMRQAGEIPDFCVVGEPTNPGRLGEVIKIGRRGSLNATLTVRGRQGHVAYPHRADNPLPRLVAALHALTTTRLDDGMEGFEPSSLQLTTVDVGNPATNVIPEQAQARLNIRFNPLHRGDDLARWLRGIVQDHAPDAVIDIAISGEAFVTDPDRDPRPGASHGIAALRMAIQRITGLSPRLDTGGGTSDARFITHLCPVVEFGLVGATMHQRDEAVAVRDLQDLTGIYEALLDFYLGKDSA</sequence>
<organism>
    <name type="scientific">Granulibacter bethesdensis (strain ATCC BAA-1260 / CGDNIH1)</name>
    <dbReference type="NCBI Taxonomy" id="391165"/>
    <lineage>
        <taxon>Bacteria</taxon>
        <taxon>Pseudomonadati</taxon>
        <taxon>Pseudomonadota</taxon>
        <taxon>Alphaproteobacteria</taxon>
        <taxon>Acetobacterales</taxon>
        <taxon>Acetobacteraceae</taxon>
        <taxon>Granulibacter</taxon>
    </lineage>
</organism>
<accession>Q0BUB7</accession>
<evidence type="ECO:0000255" key="1">
    <source>
        <dbReference type="HAMAP-Rule" id="MF_01690"/>
    </source>
</evidence>
<evidence type="ECO:0000305" key="2"/>
<keyword id="KW-0028">Amino-acid biosynthesis</keyword>
<keyword id="KW-0170">Cobalt</keyword>
<keyword id="KW-0220">Diaminopimelate biosynthesis</keyword>
<keyword id="KW-0378">Hydrolase</keyword>
<keyword id="KW-0457">Lysine biosynthesis</keyword>
<keyword id="KW-0479">Metal-binding</keyword>
<keyword id="KW-1185">Reference proteome</keyword>
<keyword id="KW-0862">Zinc</keyword>
<protein>
    <recommendedName>
        <fullName evidence="1">Succinyl-diaminopimelate desuccinylase</fullName>
        <shortName evidence="1">SDAP desuccinylase</shortName>
        <ecNumber evidence="1">3.5.1.18</ecNumber>
    </recommendedName>
    <alternativeName>
        <fullName evidence="1">N-succinyl-LL-2,6-diaminoheptanedioate amidohydrolase</fullName>
    </alternativeName>
</protein>
<feature type="chain" id="PRO_0000375574" description="Succinyl-diaminopimelate desuccinylase">
    <location>
        <begin position="1"/>
        <end position="383"/>
    </location>
</feature>
<feature type="active site" evidence="1">
    <location>
        <position position="70"/>
    </location>
</feature>
<feature type="active site" description="Proton acceptor" evidence="1">
    <location>
        <position position="130"/>
    </location>
</feature>
<feature type="binding site" evidence="1">
    <location>
        <position position="68"/>
    </location>
    <ligand>
        <name>Zn(2+)</name>
        <dbReference type="ChEBI" id="CHEBI:29105"/>
        <label>1</label>
    </ligand>
</feature>
<feature type="binding site" evidence="1">
    <location>
        <position position="100"/>
    </location>
    <ligand>
        <name>Zn(2+)</name>
        <dbReference type="ChEBI" id="CHEBI:29105"/>
        <label>1</label>
    </ligand>
</feature>
<feature type="binding site" evidence="1">
    <location>
        <position position="100"/>
    </location>
    <ligand>
        <name>Zn(2+)</name>
        <dbReference type="ChEBI" id="CHEBI:29105"/>
        <label>2</label>
    </ligand>
</feature>
<feature type="binding site" evidence="1">
    <location>
        <position position="131"/>
    </location>
    <ligand>
        <name>Zn(2+)</name>
        <dbReference type="ChEBI" id="CHEBI:29105"/>
        <label>2</label>
    </ligand>
</feature>
<feature type="binding site" evidence="1">
    <location>
        <position position="159"/>
    </location>
    <ligand>
        <name>Zn(2+)</name>
        <dbReference type="ChEBI" id="CHEBI:29105"/>
        <label>1</label>
    </ligand>
</feature>
<feature type="binding site" evidence="1">
    <location>
        <position position="352"/>
    </location>
    <ligand>
        <name>Zn(2+)</name>
        <dbReference type="ChEBI" id="CHEBI:29105"/>
        <label>2</label>
    </ligand>
</feature>
<dbReference type="EC" id="3.5.1.18" evidence="1"/>
<dbReference type="EMBL" id="CP000394">
    <property type="protein sequence ID" value="ABI61585.1"/>
    <property type="status" value="ALT_INIT"/>
    <property type="molecule type" value="Genomic_DNA"/>
</dbReference>
<dbReference type="RefSeq" id="WP_025318321.1">
    <property type="nucleotide sequence ID" value="NC_008343.2"/>
</dbReference>
<dbReference type="SMR" id="Q0BUB7"/>
<dbReference type="STRING" id="391165.GbCGDNIH1_0687"/>
<dbReference type="KEGG" id="gbe:GbCGDNIH1_0687"/>
<dbReference type="eggNOG" id="COG0624">
    <property type="taxonomic scope" value="Bacteria"/>
</dbReference>
<dbReference type="HOGENOM" id="CLU_021802_4_0_5"/>
<dbReference type="OrthoDB" id="9809784at2"/>
<dbReference type="UniPathway" id="UPA00034">
    <property type="reaction ID" value="UER00021"/>
</dbReference>
<dbReference type="Proteomes" id="UP000001963">
    <property type="component" value="Chromosome"/>
</dbReference>
<dbReference type="GO" id="GO:0008777">
    <property type="term" value="F:acetylornithine deacetylase activity"/>
    <property type="evidence" value="ECO:0007669"/>
    <property type="project" value="TreeGrafter"/>
</dbReference>
<dbReference type="GO" id="GO:0050897">
    <property type="term" value="F:cobalt ion binding"/>
    <property type="evidence" value="ECO:0007669"/>
    <property type="project" value="UniProtKB-UniRule"/>
</dbReference>
<dbReference type="GO" id="GO:0009014">
    <property type="term" value="F:succinyl-diaminopimelate desuccinylase activity"/>
    <property type="evidence" value="ECO:0007669"/>
    <property type="project" value="UniProtKB-UniRule"/>
</dbReference>
<dbReference type="GO" id="GO:0008270">
    <property type="term" value="F:zinc ion binding"/>
    <property type="evidence" value="ECO:0007669"/>
    <property type="project" value="UniProtKB-UniRule"/>
</dbReference>
<dbReference type="GO" id="GO:0019877">
    <property type="term" value="P:diaminopimelate biosynthetic process"/>
    <property type="evidence" value="ECO:0007669"/>
    <property type="project" value="UniProtKB-UniRule"/>
</dbReference>
<dbReference type="GO" id="GO:0006526">
    <property type="term" value="P:L-arginine biosynthetic process"/>
    <property type="evidence" value="ECO:0007669"/>
    <property type="project" value="TreeGrafter"/>
</dbReference>
<dbReference type="GO" id="GO:0009089">
    <property type="term" value="P:lysine biosynthetic process via diaminopimelate"/>
    <property type="evidence" value="ECO:0007669"/>
    <property type="project" value="UniProtKB-UniRule"/>
</dbReference>
<dbReference type="CDD" id="cd03891">
    <property type="entry name" value="M20_DapE_proteobac"/>
    <property type="match status" value="1"/>
</dbReference>
<dbReference type="Gene3D" id="3.40.630.10">
    <property type="entry name" value="Zn peptidases"/>
    <property type="match status" value="2"/>
</dbReference>
<dbReference type="HAMAP" id="MF_01690">
    <property type="entry name" value="DapE"/>
    <property type="match status" value="1"/>
</dbReference>
<dbReference type="InterPro" id="IPR036264">
    <property type="entry name" value="Bact_exopeptidase_dim_dom"/>
</dbReference>
<dbReference type="InterPro" id="IPR005941">
    <property type="entry name" value="DapE_proteobac"/>
</dbReference>
<dbReference type="InterPro" id="IPR002933">
    <property type="entry name" value="Peptidase_M20"/>
</dbReference>
<dbReference type="InterPro" id="IPR011650">
    <property type="entry name" value="Peptidase_M20_dimer"/>
</dbReference>
<dbReference type="InterPro" id="IPR050072">
    <property type="entry name" value="Peptidase_M20A"/>
</dbReference>
<dbReference type="NCBIfam" id="TIGR01246">
    <property type="entry name" value="dapE_proteo"/>
    <property type="match status" value="1"/>
</dbReference>
<dbReference type="NCBIfam" id="NF009557">
    <property type="entry name" value="PRK13009.1"/>
    <property type="match status" value="1"/>
</dbReference>
<dbReference type="PANTHER" id="PTHR43808">
    <property type="entry name" value="ACETYLORNITHINE DEACETYLASE"/>
    <property type="match status" value="1"/>
</dbReference>
<dbReference type="PANTHER" id="PTHR43808:SF31">
    <property type="entry name" value="N-ACETYL-L-CITRULLINE DEACETYLASE"/>
    <property type="match status" value="1"/>
</dbReference>
<dbReference type="Pfam" id="PF07687">
    <property type="entry name" value="M20_dimer"/>
    <property type="match status" value="1"/>
</dbReference>
<dbReference type="Pfam" id="PF01546">
    <property type="entry name" value="Peptidase_M20"/>
    <property type="match status" value="1"/>
</dbReference>
<dbReference type="SUPFAM" id="SSF55031">
    <property type="entry name" value="Bacterial exopeptidase dimerisation domain"/>
    <property type="match status" value="1"/>
</dbReference>
<dbReference type="SUPFAM" id="SSF53187">
    <property type="entry name" value="Zn-dependent exopeptidases"/>
    <property type="match status" value="1"/>
</dbReference>
<dbReference type="PROSITE" id="PS00759">
    <property type="entry name" value="ARGE_DAPE_CPG2_2"/>
    <property type="match status" value="1"/>
</dbReference>
<name>DAPE_GRABC</name>
<proteinExistence type="inferred from homology"/>
<gene>
    <name evidence="1" type="primary">dapE</name>
    <name type="ordered locus">GbCGDNIH1_0687</name>
</gene>
<reference key="1">
    <citation type="journal article" date="2007" name="J. Bacteriol.">
        <title>Genome sequence analysis of the emerging human pathogenic acetic acid bacterium Granulibacter bethesdensis.</title>
        <authorList>
            <person name="Greenberg D.E."/>
            <person name="Porcella S.F."/>
            <person name="Zelazny A.M."/>
            <person name="Virtaneva K."/>
            <person name="Sturdevant D.E."/>
            <person name="Kupko J.J. III"/>
            <person name="Barbian K.D."/>
            <person name="Babar A."/>
            <person name="Dorward D.W."/>
            <person name="Holland S.M."/>
        </authorList>
    </citation>
    <scope>NUCLEOTIDE SEQUENCE [LARGE SCALE GENOMIC DNA]</scope>
    <source>
        <strain>ATCC BAA-1260 / CGDNIH1</strain>
    </source>
</reference>
<comment type="function">
    <text evidence="1">Catalyzes the hydrolysis of N-succinyl-L,L-diaminopimelic acid (SDAP), forming succinate and LL-2,6-diaminopimelate (DAP), an intermediate involved in the bacterial biosynthesis of lysine and meso-diaminopimelic acid, an essential component of bacterial cell walls.</text>
</comment>
<comment type="catalytic activity">
    <reaction evidence="1">
        <text>N-succinyl-(2S,6S)-2,6-diaminopimelate + H2O = (2S,6S)-2,6-diaminopimelate + succinate</text>
        <dbReference type="Rhea" id="RHEA:22608"/>
        <dbReference type="ChEBI" id="CHEBI:15377"/>
        <dbReference type="ChEBI" id="CHEBI:30031"/>
        <dbReference type="ChEBI" id="CHEBI:57609"/>
        <dbReference type="ChEBI" id="CHEBI:58087"/>
        <dbReference type="EC" id="3.5.1.18"/>
    </reaction>
</comment>
<comment type="cofactor">
    <cofactor evidence="1">
        <name>Zn(2+)</name>
        <dbReference type="ChEBI" id="CHEBI:29105"/>
    </cofactor>
    <cofactor evidence="1">
        <name>Co(2+)</name>
        <dbReference type="ChEBI" id="CHEBI:48828"/>
    </cofactor>
    <text evidence="1">Binds 2 Zn(2+) or Co(2+) ions per subunit.</text>
</comment>
<comment type="pathway">
    <text evidence="1">Amino-acid biosynthesis; L-lysine biosynthesis via DAP pathway; LL-2,6-diaminopimelate from (S)-tetrahydrodipicolinate (succinylase route): step 3/3.</text>
</comment>
<comment type="subunit">
    <text evidence="1">Homodimer.</text>
</comment>
<comment type="similarity">
    <text evidence="1">Belongs to the peptidase M20A family. DapE subfamily.</text>
</comment>
<comment type="sequence caution" evidence="2">
    <conflict type="erroneous initiation">
        <sequence resource="EMBL-CDS" id="ABI61585"/>
    </conflict>
</comment>